<keyword id="KW-0025">Alternative splicing</keyword>
<keyword id="KW-0150">Chloroplast</keyword>
<keyword id="KW-0175">Coiled coil</keyword>
<keyword id="KW-0597">Phosphoprotein</keyword>
<keyword id="KW-0934">Plastid</keyword>
<keyword id="KW-1185">Reference proteome</keyword>
<keyword id="KW-0809">Transit peptide</keyword>
<reference key="1">
    <citation type="journal article" date="2000" name="Nature">
        <title>Sequence and analysis of chromosome 3 of the plant Arabidopsis thaliana.</title>
        <authorList>
            <person name="Salanoubat M."/>
            <person name="Lemcke K."/>
            <person name="Rieger M."/>
            <person name="Ansorge W."/>
            <person name="Unseld M."/>
            <person name="Fartmann B."/>
            <person name="Valle G."/>
            <person name="Bloecker H."/>
            <person name="Perez-Alonso M."/>
            <person name="Obermaier B."/>
            <person name="Delseny M."/>
            <person name="Boutry M."/>
            <person name="Grivell L.A."/>
            <person name="Mache R."/>
            <person name="Puigdomenech P."/>
            <person name="De Simone V."/>
            <person name="Choisne N."/>
            <person name="Artiguenave F."/>
            <person name="Robert C."/>
            <person name="Brottier P."/>
            <person name="Wincker P."/>
            <person name="Cattolico L."/>
            <person name="Weissenbach J."/>
            <person name="Saurin W."/>
            <person name="Quetier F."/>
            <person name="Schaefer M."/>
            <person name="Mueller-Auer S."/>
            <person name="Gabel C."/>
            <person name="Fuchs M."/>
            <person name="Benes V."/>
            <person name="Wurmbach E."/>
            <person name="Drzonek H."/>
            <person name="Erfle H."/>
            <person name="Jordan N."/>
            <person name="Bangert S."/>
            <person name="Wiedelmann R."/>
            <person name="Kranz H."/>
            <person name="Voss H."/>
            <person name="Holland R."/>
            <person name="Brandt P."/>
            <person name="Nyakatura G."/>
            <person name="Vezzi A."/>
            <person name="D'Angelo M."/>
            <person name="Pallavicini A."/>
            <person name="Toppo S."/>
            <person name="Simionati B."/>
            <person name="Conrad A."/>
            <person name="Hornischer K."/>
            <person name="Kauer G."/>
            <person name="Loehnert T.-H."/>
            <person name="Nordsiek G."/>
            <person name="Reichelt J."/>
            <person name="Scharfe M."/>
            <person name="Schoen O."/>
            <person name="Bargues M."/>
            <person name="Terol J."/>
            <person name="Climent J."/>
            <person name="Navarro P."/>
            <person name="Collado C."/>
            <person name="Perez-Perez A."/>
            <person name="Ottenwaelder B."/>
            <person name="Duchemin D."/>
            <person name="Cooke R."/>
            <person name="Laudie M."/>
            <person name="Berger-Llauro C."/>
            <person name="Purnelle B."/>
            <person name="Masuy D."/>
            <person name="de Haan M."/>
            <person name="Maarse A.C."/>
            <person name="Alcaraz J.-P."/>
            <person name="Cottet A."/>
            <person name="Casacuberta E."/>
            <person name="Monfort A."/>
            <person name="Argiriou A."/>
            <person name="Flores M."/>
            <person name="Liguori R."/>
            <person name="Vitale D."/>
            <person name="Mannhaupt G."/>
            <person name="Haase D."/>
            <person name="Schoof H."/>
            <person name="Rudd S."/>
            <person name="Zaccaria P."/>
            <person name="Mewes H.-W."/>
            <person name="Mayer K.F.X."/>
            <person name="Kaul S."/>
            <person name="Town C.D."/>
            <person name="Koo H.L."/>
            <person name="Tallon L.J."/>
            <person name="Jenkins J."/>
            <person name="Rooney T."/>
            <person name="Rizzo M."/>
            <person name="Walts A."/>
            <person name="Utterback T."/>
            <person name="Fujii C.Y."/>
            <person name="Shea T.P."/>
            <person name="Creasy T.H."/>
            <person name="Haas B."/>
            <person name="Maiti R."/>
            <person name="Wu D."/>
            <person name="Peterson J."/>
            <person name="Van Aken S."/>
            <person name="Pai G."/>
            <person name="Militscher J."/>
            <person name="Sellers P."/>
            <person name="Gill J.E."/>
            <person name="Feldblyum T.V."/>
            <person name="Preuss D."/>
            <person name="Lin X."/>
            <person name="Nierman W.C."/>
            <person name="Salzberg S.L."/>
            <person name="White O."/>
            <person name="Venter J.C."/>
            <person name="Fraser C.M."/>
            <person name="Kaneko T."/>
            <person name="Nakamura Y."/>
            <person name="Sato S."/>
            <person name="Kato T."/>
            <person name="Asamizu E."/>
            <person name="Sasamoto S."/>
            <person name="Kimura T."/>
            <person name="Idesawa K."/>
            <person name="Kawashima K."/>
            <person name="Kishida Y."/>
            <person name="Kiyokawa C."/>
            <person name="Kohara M."/>
            <person name="Matsumoto M."/>
            <person name="Matsuno A."/>
            <person name="Muraki A."/>
            <person name="Nakayama S."/>
            <person name="Nakazaki N."/>
            <person name="Shinpo S."/>
            <person name="Takeuchi C."/>
            <person name="Wada T."/>
            <person name="Watanabe A."/>
            <person name="Yamada M."/>
            <person name="Yasuda M."/>
            <person name="Tabata S."/>
        </authorList>
    </citation>
    <scope>NUCLEOTIDE SEQUENCE [LARGE SCALE GENOMIC DNA]</scope>
    <source>
        <strain>cv. Columbia</strain>
    </source>
</reference>
<reference key="2">
    <citation type="journal article" date="2017" name="Plant J.">
        <title>Araport11: a complete reannotation of the Arabidopsis thaliana reference genome.</title>
        <authorList>
            <person name="Cheng C.Y."/>
            <person name="Krishnakumar V."/>
            <person name="Chan A.P."/>
            <person name="Thibaud-Nissen F."/>
            <person name="Schobel S."/>
            <person name="Town C.D."/>
        </authorList>
    </citation>
    <scope>GENOME REANNOTATION</scope>
    <source>
        <strain>cv. Columbia</strain>
    </source>
</reference>
<reference key="3">
    <citation type="journal article" date="2002" name="Science">
        <title>Functional annotation of a full-length Arabidopsis cDNA collection.</title>
        <authorList>
            <person name="Seki M."/>
            <person name="Narusaka M."/>
            <person name="Kamiya A."/>
            <person name="Ishida J."/>
            <person name="Satou M."/>
            <person name="Sakurai T."/>
            <person name="Nakajima M."/>
            <person name="Enju A."/>
            <person name="Akiyama K."/>
            <person name="Oono Y."/>
            <person name="Muramatsu M."/>
            <person name="Hayashizaki Y."/>
            <person name="Kawai J."/>
            <person name="Carninci P."/>
            <person name="Itoh M."/>
            <person name="Ishii Y."/>
            <person name="Arakawa T."/>
            <person name="Shibata K."/>
            <person name="Shinagawa A."/>
            <person name="Shinozaki K."/>
        </authorList>
    </citation>
    <scope>NUCLEOTIDE SEQUENCE [LARGE SCALE MRNA] (ISOFORM 2)</scope>
    <source>
        <strain>cv. Columbia</strain>
    </source>
</reference>
<reference key="4">
    <citation type="journal article" date="2008" name="J. Proteome Res.">
        <title>Site-specific phosphorylation profiling of Arabidopsis proteins by mass spectrometry and peptide chip analysis.</title>
        <authorList>
            <person name="de la Fuente van Bentem S."/>
            <person name="Anrather D."/>
            <person name="Dohnal I."/>
            <person name="Roitinger E."/>
            <person name="Csaszar E."/>
            <person name="Joore J."/>
            <person name="Buijnink J."/>
            <person name="Carreri A."/>
            <person name="Forzani C."/>
            <person name="Lorkovic Z.J."/>
            <person name="Barta A."/>
            <person name="Lecourieux D."/>
            <person name="Verhounig A."/>
            <person name="Jonak C."/>
            <person name="Hirt H."/>
        </authorList>
    </citation>
    <scope>PHOSPHORYLATION [LARGE SCALE ANALYSIS] AT SER-762</scope>
    <scope>IDENTIFICATION BY MASS SPECTROMETRY [LARGE SCALE ANALYSIS]</scope>
    <source>
        <tissue>Root</tissue>
    </source>
</reference>
<accession>Q9LEX8</accession>
<accession>Q8GWE9</accession>
<organism>
    <name type="scientific">Arabidopsis thaliana</name>
    <name type="common">Mouse-ear cress</name>
    <dbReference type="NCBI Taxonomy" id="3702"/>
    <lineage>
        <taxon>Eukaryota</taxon>
        <taxon>Viridiplantae</taxon>
        <taxon>Streptophyta</taxon>
        <taxon>Embryophyta</taxon>
        <taxon>Tracheophyta</taxon>
        <taxon>Spermatophyta</taxon>
        <taxon>Magnoliopsida</taxon>
        <taxon>eudicotyledons</taxon>
        <taxon>Gunneridae</taxon>
        <taxon>Pentapetalae</taxon>
        <taxon>rosids</taxon>
        <taxon>malvids</taxon>
        <taxon>Brassicales</taxon>
        <taxon>Brassicaceae</taxon>
        <taxon>Camelineae</taxon>
        <taxon>Arabidopsis</taxon>
    </lineage>
</organism>
<name>Y3093_ARATH</name>
<gene>
    <name evidence="4" type="ordered locus">At3g60930</name>
    <name evidence="5" type="ORF">T27I15_20</name>
</gene>
<dbReference type="EMBL" id="AL358732">
    <property type="protein sequence ID" value="CAB94129.1"/>
    <property type="molecule type" value="Genomic_DNA"/>
</dbReference>
<dbReference type="EMBL" id="CP002686">
    <property type="status" value="NOT_ANNOTATED_CDS"/>
    <property type="molecule type" value="Genomic_DNA"/>
</dbReference>
<dbReference type="EMBL" id="AK118886">
    <property type="protein sequence ID" value="BAC43471.1"/>
    <property type="molecule type" value="mRNA"/>
</dbReference>
<dbReference type="PIR" id="T50514">
    <property type="entry name" value="T50514"/>
</dbReference>
<dbReference type="SMR" id="Q9LEX8"/>
<dbReference type="GlyGen" id="Q9LEX8">
    <property type="glycosylation" value="1 site"/>
</dbReference>
<dbReference type="iPTMnet" id="Q9LEX8"/>
<dbReference type="Araport" id="AT3G60930"/>
<dbReference type="TAIR" id="AT3G60930"/>
<dbReference type="InParanoid" id="Q9LEX8"/>
<dbReference type="PRO" id="PR:Q9LEX8"/>
<dbReference type="Proteomes" id="UP000006548">
    <property type="component" value="Chromosome 3"/>
</dbReference>
<dbReference type="ExpressionAtlas" id="Q9LEX8">
    <property type="expression patterns" value="baseline and differential"/>
</dbReference>
<dbReference type="GO" id="GO:0009507">
    <property type="term" value="C:chloroplast"/>
    <property type="evidence" value="ECO:0007669"/>
    <property type="project" value="UniProtKB-SubCell"/>
</dbReference>
<dbReference type="PANTHER" id="PTHR31099:SF49">
    <property type="entry name" value="MYOSIN HEAVY CHAIN-LIKE PROTEIN"/>
    <property type="match status" value="1"/>
</dbReference>
<dbReference type="PANTHER" id="PTHR31099">
    <property type="entry name" value="OS06G0165300 PROTEIN"/>
    <property type="match status" value="1"/>
</dbReference>
<proteinExistence type="evidence at protein level"/>
<comment type="subcellular location">
    <subcellularLocation>
        <location evidence="1">Plastid</location>
        <location evidence="1">Chloroplast</location>
    </subcellularLocation>
</comment>
<comment type="alternative products">
    <event type="alternative splicing"/>
    <isoform>
        <id>Q9LEX8-1</id>
        <name>1</name>
        <sequence type="displayed"/>
    </isoform>
    <isoform>
        <id>Q9LEX8-2</id>
        <name>2</name>
        <sequence type="described" ref="VSP_057672"/>
    </isoform>
</comment>
<evidence type="ECO:0000255" key="1"/>
<evidence type="ECO:0000256" key="2">
    <source>
        <dbReference type="SAM" id="MobiDB-lite"/>
    </source>
</evidence>
<evidence type="ECO:0000305" key="3"/>
<evidence type="ECO:0000312" key="4">
    <source>
        <dbReference type="Araport" id="AT3G60930"/>
    </source>
</evidence>
<evidence type="ECO:0000312" key="5">
    <source>
        <dbReference type="EMBL" id="CAB94129.1"/>
    </source>
</evidence>
<evidence type="ECO:0007744" key="6">
    <source>
    </source>
</evidence>
<protein>
    <recommendedName>
        <fullName evidence="3">Uncharacterized protein At3g60930, chloroplastic</fullName>
    </recommendedName>
</protein>
<feature type="transit peptide" description="Chloroplast" evidence="1">
    <location>
        <begin position="1"/>
        <end position="58"/>
    </location>
</feature>
<feature type="chain" id="PRO_0000433103" description="Uncharacterized protein At3g60930, chloroplastic">
    <location>
        <begin position="59"/>
        <end position="798"/>
    </location>
</feature>
<feature type="region of interest" description="Disordered" evidence="2">
    <location>
        <begin position="1"/>
        <end position="99"/>
    </location>
</feature>
<feature type="region of interest" description="Disordered" evidence="2">
    <location>
        <begin position="135"/>
        <end position="158"/>
    </location>
</feature>
<feature type="region of interest" description="Disordered" evidence="2">
    <location>
        <begin position="417"/>
        <end position="473"/>
    </location>
</feature>
<feature type="region of interest" description="Disordered" evidence="2">
    <location>
        <begin position="749"/>
        <end position="798"/>
    </location>
</feature>
<feature type="coiled-coil region" evidence="1">
    <location>
        <begin position="578"/>
        <end position="658"/>
    </location>
</feature>
<feature type="compositionally biased region" description="Low complexity" evidence="2">
    <location>
        <begin position="1"/>
        <end position="13"/>
    </location>
</feature>
<feature type="compositionally biased region" description="Polar residues" evidence="2">
    <location>
        <begin position="35"/>
        <end position="55"/>
    </location>
</feature>
<feature type="compositionally biased region" description="Basic and acidic residues" evidence="2">
    <location>
        <begin position="57"/>
        <end position="79"/>
    </location>
</feature>
<feature type="compositionally biased region" description="Basic residues" evidence="2">
    <location>
        <begin position="137"/>
        <end position="146"/>
    </location>
</feature>
<feature type="compositionally biased region" description="Low complexity" evidence="2">
    <location>
        <begin position="462"/>
        <end position="473"/>
    </location>
</feature>
<feature type="compositionally biased region" description="Basic and acidic residues" evidence="2">
    <location>
        <begin position="789"/>
        <end position="798"/>
    </location>
</feature>
<feature type="modified residue" description="Phosphoserine" evidence="6">
    <location>
        <position position="762"/>
    </location>
</feature>
<feature type="splice variant" id="VSP_057672" description="In isoform 2.">
    <location>
        <begin position="1"/>
        <end position="385"/>
    </location>
</feature>
<sequence length="798" mass="88668">MSSSQSPSTPSASLVDSSDSKHPDDLPQIYKRRSVWTSSEDAVSSSNSPEQTTPFTVREDTNADIARELDLPDDPEPHLVRRSSAPMVDEAGTSNWQDASEPLMPTVKIEDFLYFGPNETEDILRLNEQKAFEKAEKKKRKKKKKAVMPNPPGSSMCTEQSLSDLKARFGLGAVTLRVPSPEERADSPPAGFYTLYEGFFYGCLLWLPIPRLVLEYVTSYQIALSQITMRSLRHLLGILIRSYESETEITLAHLRNFLEIRRVPKSEVDRYYISPAKGKKIIDGFPSKDEPYTDHFFFVAIEDAIHEDLLGTVLTRWGILERTLKFLEPIPDDFLSAFHALSARKCDWLKHFSRERVECALRLLHGVSCPTSSESSDHRTQFFVDMQSTKLTLREVYAKKKEDKERRLAEERRLVNTGLISPRADPEATQDGNVIPDATAPQTAPEASRDGVNPYTAGPVDAAPAEAQGAEPSAAAPEAVLALPAIDKAAGKRIRVDDVSSKKKKKKKKASGSEVEKILPIFEDRTASANLLGGCVGPLLPPPDTLLESRKYAETASHFLRAVASMNRMVHSYDSAMRSNMEVAGKLAEAESRIQAIEREKNEALSEAAAAKLEKEEVERTAHVNKENAIKMAEQNLKANSEIVRLKRMLSEARGLRDSEVARAVQTTRREVSETFIAKMKNAEHKVSLLDEVNDRFMYLSQARANAQLIEALEGGGVLESEKEQVDEWLKDFADAEVNLNRFMSELKDDLKAPAPEPAPLSPGGHRSVESLADEAGITDQAGSLLPAKDNRPSEDLD</sequence>